<reference key="1">
    <citation type="journal article" date="2007" name="Proc. Natl. Acad. Sci. U.S.A.">
        <title>Independent sorting-out of thousands of duplicated gene pairs in two yeast species descended from a whole-genome duplication.</title>
        <authorList>
            <person name="Scannell D.R."/>
            <person name="Frank A.C."/>
            <person name="Conant G.C."/>
            <person name="Byrne K.P."/>
            <person name="Woolfit M."/>
            <person name="Wolfe K.H."/>
        </authorList>
    </citation>
    <scope>NUCLEOTIDE SEQUENCE [LARGE SCALE GENOMIC DNA]</scope>
    <source>
        <strain>ATCC 22028 / DSM 70294 / BCRC 21397 / CBS 2163 / NBRC 10782 / NRRL Y-8283 / UCD 57-17</strain>
    </source>
</reference>
<feature type="chain" id="PRO_0000367889" description="Ubiquitin-related modifier 1">
    <location>
        <begin position="1"/>
        <end position="103"/>
    </location>
</feature>
<feature type="modified residue" description="1-thioglycine" evidence="1">
    <location>
        <position position="103"/>
    </location>
</feature>
<feature type="cross-link" description="Glycyl lysine isopeptide (Gly-Lys) (interchain with K-? in acceptor proteins)" evidence="1">
    <location>
        <position position="103"/>
    </location>
</feature>
<name>URM1_VANPO</name>
<sequence>MVNVKVEFLGGLDAIFKKQRVHKLTLKKNNSDDEPVTVGDLIDYIVENMIEDKNDVEVFLQNGTVRAGILTLINDTDWELEGEKEYELEDGDIISFTSTLHGG</sequence>
<organism>
    <name type="scientific">Vanderwaltozyma polyspora (strain ATCC 22028 / DSM 70294 / BCRC 21397 / CBS 2163 / NBRC 10782 / NRRL Y-8283 / UCD 57-17)</name>
    <name type="common">Kluyveromyces polysporus</name>
    <dbReference type="NCBI Taxonomy" id="436907"/>
    <lineage>
        <taxon>Eukaryota</taxon>
        <taxon>Fungi</taxon>
        <taxon>Dikarya</taxon>
        <taxon>Ascomycota</taxon>
        <taxon>Saccharomycotina</taxon>
        <taxon>Saccharomycetes</taxon>
        <taxon>Saccharomycetales</taxon>
        <taxon>Saccharomycetaceae</taxon>
        <taxon>Vanderwaltozyma</taxon>
    </lineage>
</organism>
<proteinExistence type="inferred from homology"/>
<evidence type="ECO:0000255" key="1">
    <source>
        <dbReference type="HAMAP-Rule" id="MF_03048"/>
    </source>
</evidence>
<dbReference type="EMBL" id="DS480454">
    <property type="protein sequence ID" value="EDO15569.1"/>
    <property type="molecule type" value="Genomic_DNA"/>
</dbReference>
<dbReference type="RefSeq" id="XP_001643427.1">
    <property type="nucleotide sequence ID" value="XM_001643377.1"/>
</dbReference>
<dbReference type="SMR" id="A7TQ77"/>
<dbReference type="FunCoup" id="A7TQ77">
    <property type="interactions" value="922"/>
</dbReference>
<dbReference type="STRING" id="436907.A7TQ77"/>
<dbReference type="GeneID" id="5543658"/>
<dbReference type="KEGG" id="vpo:Kpol_487p2"/>
<dbReference type="eggNOG" id="KOG4146">
    <property type="taxonomic scope" value="Eukaryota"/>
</dbReference>
<dbReference type="HOGENOM" id="CLU_148208_0_0_1"/>
<dbReference type="InParanoid" id="A7TQ77"/>
<dbReference type="OMA" id="DYELQPN"/>
<dbReference type="OrthoDB" id="10248987at2759"/>
<dbReference type="PhylomeDB" id="A7TQ77"/>
<dbReference type="UniPathway" id="UPA00988"/>
<dbReference type="Proteomes" id="UP000000267">
    <property type="component" value="Unassembled WGS sequence"/>
</dbReference>
<dbReference type="GO" id="GO:0005829">
    <property type="term" value="C:cytosol"/>
    <property type="evidence" value="ECO:0007669"/>
    <property type="project" value="UniProtKB-UniRule"/>
</dbReference>
<dbReference type="GO" id="GO:0042803">
    <property type="term" value="F:protein homodimerization activity"/>
    <property type="evidence" value="ECO:0007669"/>
    <property type="project" value="EnsemblFungi"/>
</dbReference>
<dbReference type="GO" id="GO:0031386">
    <property type="term" value="F:protein tag activity"/>
    <property type="evidence" value="ECO:0007669"/>
    <property type="project" value="EnsemblFungi"/>
</dbReference>
<dbReference type="GO" id="GO:0097163">
    <property type="term" value="F:sulfur carrier activity"/>
    <property type="evidence" value="ECO:0007669"/>
    <property type="project" value="EnsemblFungi"/>
</dbReference>
<dbReference type="GO" id="GO:0007114">
    <property type="term" value="P:cell budding"/>
    <property type="evidence" value="ECO:0007669"/>
    <property type="project" value="EnsemblFungi"/>
</dbReference>
<dbReference type="GO" id="GO:0034599">
    <property type="term" value="P:cellular response to oxidative stress"/>
    <property type="evidence" value="ECO:0007669"/>
    <property type="project" value="EnsemblFungi"/>
</dbReference>
<dbReference type="GO" id="GO:0001403">
    <property type="term" value="P:invasive growth in response to glucose limitation"/>
    <property type="evidence" value="ECO:0007669"/>
    <property type="project" value="EnsemblFungi"/>
</dbReference>
<dbReference type="GO" id="GO:0032447">
    <property type="term" value="P:protein urmylation"/>
    <property type="evidence" value="ECO:0007669"/>
    <property type="project" value="UniProtKB-UniRule"/>
</dbReference>
<dbReference type="GO" id="GO:0002143">
    <property type="term" value="P:tRNA wobble position uridine thiolation"/>
    <property type="evidence" value="ECO:0007669"/>
    <property type="project" value="EnsemblFungi"/>
</dbReference>
<dbReference type="CDD" id="cd01764">
    <property type="entry name" value="Ubl_Urm1"/>
    <property type="match status" value="1"/>
</dbReference>
<dbReference type="FunFam" id="3.10.20.30:FF:000052">
    <property type="entry name" value="Ubiquitin-related modifier 1"/>
    <property type="match status" value="1"/>
</dbReference>
<dbReference type="Gene3D" id="3.10.20.30">
    <property type="match status" value="1"/>
</dbReference>
<dbReference type="HAMAP" id="MF_03048">
    <property type="entry name" value="Urm1"/>
    <property type="match status" value="1"/>
</dbReference>
<dbReference type="InterPro" id="IPR012675">
    <property type="entry name" value="Beta-grasp_dom_sf"/>
</dbReference>
<dbReference type="InterPro" id="IPR016155">
    <property type="entry name" value="Mopterin_synth/thiamin_S_b"/>
</dbReference>
<dbReference type="InterPro" id="IPR015221">
    <property type="entry name" value="Urm1"/>
</dbReference>
<dbReference type="PANTHER" id="PTHR14986">
    <property type="entry name" value="RURM1 PROTEIN"/>
    <property type="match status" value="1"/>
</dbReference>
<dbReference type="Pfam" id="PF09138">
    <property type="entry name" value="Urm1"/>
    <property type="match status" value="1"/>
</dbReference>
<dbReference type="PIRSF" id="PIRSF037379">
    <property type="entry name" value="Ubiquitin-related_modifier_1"/>
    <property type="match status" value="1"/>
</dbReference>
<dbReference type="SUPFAM" id="SSF54285">
    <property type="entry name" value="MoaD/ThiS"/>
    <property type="match status" value="1"/>
</dbReference>
<keyword id="KW-0963">Cytoplasm</keyword>
<keyword id="KW-1017">Isopeptide bond</keyword>
<keyword id="KW-1185">Reference proteome</keyword>
<keyword id="KW-0819">tRNA processing</keyword>
<keyword id="KW-0833">Ubl conjugation pathway</keyword>
<accession>A7TQ77</accession>
<protein>
    <recommendedName>
        <fullName evidence="1">Ubiquitin-related modifier 1</fullName>
    </recommendedName>
</protein>
<comment type="function">
    <text evidence="1">Acts as a sulfur carrier required for 2-thiolation of mcm(5)S(2)U at tRNA wobble positions of cytosolic tRNA(Lys), tRNA(Glu) and tRNA(Gln). Serves as sulfur donor in tRNA 2-thiolation reaction by being thiocarboxylated (-COSH) at its C-terminus by the MOCS3 homolog UBA4. The sulfur is then transferred to tRNA to form 2-thiolation of mcm(5)S(2)U. Prior mcm(5) tRNA modification by the elongator complex is required for 2-thiolation. Also acts as a ubiquitin-like protein (UBL) that is covalently conjugated via an isopeptide bond to lysine residues of target proteins such as AHP1. The thiocarboxylated form serves as substrate for conjugation and oxidative stress specifically induces the formation of UBL-protein conjugates.</text>
</comment>
<comment type="pathway">
    <text evidence="1">tRNA modification; 5-methoxycarbonylmethyl-2-thiouridine-tRNA biosynthesis.</text>
</comment>
<comment type="subcellular location">
    <subcellularLocation>
        <location evidence="1">Cytoplasm</location>
    </subcellularLocation>
</comment>
<comment type="PTM">
    <text evidence="1">C-terminal thiocarboxylation occurs in 2 steps, it is first acyl-adenylated (-COAMP) via the hesA/moeB/thiF part of UBA4, then thiocarboxylated (-COSH) via the rhodanese domain of UBA4.</text>
</comment>
<comment type="similarity">
    <text evidence="1">Belongs to the URM1 family.</text>
</comment>
<gene>
    <name evidence="1" type="primary">URM1</name>
    <name type="ORF">Kpol_487p2</name>
</gene>